<keyword id="KW-0068">Autocatalytic cleavage</keyword>
<keyword id="KW-0963">Cytoplasm</keyword>
<keyword id="KW-0378">Hydrolase</keyword>
<keyword id="KW-0645">Protease</keyword>
<keyword id="KW-0647">Proteasome</keyword>
<keyword id="KW-0888">Threonine protease</keyword>
<keyword id="KW-0865">Zymogen</keyword>
<name>PSB_METM5</name>
<organism>
    <name type="scientific">Methanococcus maripaludis (strain C5 / ATCC BAA-1333)</name>
    <dbReference type="NCBI Taxonomy" id="402880"/>
    <lineage>
        <taxon>Archaea</taxon>
        <taxon>Methanobacteriati</taxon>
        <taxon>Methanobacteriota</taxon>
        <taxon>Methanomada group</taxon>
        <taxon>Methanococci</taxon>
        <taxon>Methanococcales</taxon>
        <taxon>Methanococcaceae</taxon>
        <taxon>Methanococcus</taxon>
    </lineage>
</organism>
<accession>A4FYA5</accession>
<proteinExistence type="inferred from homology"/>
<protein>
    <recommendedName>
        <fullName evidence="1">Proteasome subunit beta</fullName>
        <ecNumber evidence="1">3.4.25.1</ecNumber>
    </recommendedName>
    <alternativeName>
        <fullName evidence="1">20S proteasome beta subunit</fullName>
    </alternativeName>
    <alternativeName>
        <fullName evidence="1">Proteasome core protein PsmB</fullName>
    </alternativeName>
</protein>
<dbReference type="EC" id="3.4.25.1" evidence="1"/>
<dbReference type="EMBL" id="CP000609">
    <property type="protein sequence ID" value="ABO35189.1"/>
    <property type="molecule type" value="Genomic_DNA"/>
</dbReference>
<dbReference type="RefSeq" id="WP_011868643.1">
    <property type="nucleotide sequence ID" value="NC_009135.1"/>
</dbReference>
<dbReference type="SMR" id="A4FYA5"/>
<dbReference type="STRING" id="402880.MmarC5_0881"/>
<dbReference type="MEROPS" id="T01.002"/>
<dbReference type="GeneID" id="4928200"/>
<dbReference type="KEGG" id="mmq:MmarC5_0881"/>
<dbReference type="eggNOG" id="arCOG00970">
    <property type="taxonomic scope" value="Archaea"/>
</dbReference>
<dbReference type="HOGENOM" id="CLU_035750_7_2_2"/>
<dbReference type="OrthoDB" id="6330at2157"/>
<dbReference type="Proteomes" id="UP000000253">
    <property type="component" value="Chromosome"/>
</dbReference>
<dbReference type="GO" id="GO:0005737">
    <property type="term" value="C:cytoplasm"/>
    <property type="evidence" value="ECO:0007669"/>
    <property type="project" value="UniProtKB-SubCell"/>
</dbReference>
<dbReference type="GO" id="GO:0019774">
    <property type="term" value="C:proteasome core complex, beta-subunit complex"/>
    <property type="evidence" value="ECO:0007669"/>
    <property type="project" value="UniProtKB-UniRule"/>
</dbReference>
<dbReference type="GO" id="GO:0004298">
    <property type="term" value="F:threonine-type endopeptidase activity"/>
    <property type="evidence" value="ECO:0007669"/>
    <property type="project" value="UniProtKB-UniRule"/>
</dbReference>
<dbReference type="GO" id="GO:0010498">
    <property type="term" value="P:proteasomal protein catabolic process"/>
    <property type="evidence" value="ECO:0007669"/>
    <property type="project" value="UniProtKB-UniRule"/>
</dbReference>
<dbReference type="FunFam" id="3.60.20.10:FF:000049">
    <property type="entry name" value="Proteasome subunit beta"/>
    <property type="match status" value="1"/>
</dbReference>
<dbReference type="Gene3D" id="3.60.20.10">
    <property type="entry name" value="Glutamine Phosphoribosylpyrophosphate, subunit 1, domain 1"/>
    <property type="match status" value="1"/>
</dbReference>
<dbReference type="HAMAP" id="MF_02113_A">
    <property type="entry name" value="Proteasome_B_A"/>
    <property type="match status" value="1"/>
</dbReference>
<dbReference type="InterPro" id="IPR029055">
    <property type="entry name" value="Ntn_hydrolases_N"/>
</dbReference>
<dbReference type="InterPro" id="IPR019983">
    <property type="entry name" value="Pept_T1A_Psome_bsu_arc"/>
</dbReference>
<dbReference type="InterPro" id="IPR000243">
    <property type="entry name" value="Pept_T1A_subB"/>
</dbReference>
<dbReference type="InterPro" id="IPR016050">
    <property type="entry name" value="Proteasome_bsu_CS"/>
</dbReference>
<dbReference type="InterPro" id="IPR001353">
    <property type="entry name" value="Proteasome_sua/b"/>
</dbReference>
<dbReference type="InterPro" id="IPR023333">
    <property type="entry name" value="Proteasome_suB-type"/>
</dbReference>
<dbReference type="NCBIfam" id="TIGR03634">
    <property type="entry name" value="arc_protsome_B"/>
    <property type="match status" value="1"/>
</dbReference>
<dbReference type="PANTHER" id="PTHR32194:SF0">
    <property type="entry name" value="ATP-DEPENDENT PROTEASE SUBUNIT HSLV"/>
    <property type="match status" value="1"/>
</dbReference>
<dbReference type="PANTHER" id="PTHR32194">
    <property type="entry name" value="METALLOPROTEASE TLDD"/>
    <property type="match status" value="1"/>
</dbReference>
<dbReference type="Pfam" id="PF00227">
    <property type="entry name" value="Proteasome"/>
    <property type="match status" value="1"/>
</dbReference>
<dbReference type="PRINTS" id="PR00141">
    <property type="entry name" value="PROTEASOME"/>
</dbReference>
<dbReference type="SUPFAM" id="SSF56235">
    <property type="entry name" value="N-terminal nucleophile aminohydrolases (Ntn hydrolases)"/>
    <property type="match status" value="1"/>
</dbReference>
<dbReference type="PROSITE" id="PS00854">
    <property type="entry name" value="PROTEASOME_BETA_1"/>
    <property type="match status" value="1"/>
</dbReference>
<dbReference type="PROSITE" id="PS51476">
    <property type="entry name" value="PROTEASOME_BETA_2"/>
    <property type="match status" value="1"/>
</dbReference>
<reference key="1">
    <citation type="submission" date="2007-03" db="EMBL/GenBank/DDBJ databases">
        <title>Complete sequence of chromosome of Methanococcus maripaludis C5.</title>
        <authorList>
            <consortium name="US DOE Joint Genome Institute"/>
            <person name="Copeland A."/>
            <person name="Lucas S."/>
            <person name="Lapidus A."/>
            <person name="Barry K."/>
            <person name="Glavina del Rio T."/>
            <person name="Dalin E."/>
            <person name="Tice H."/>
            <person name="Pitluck S."/>
            <person name="Chertkov O."/>
            <person name="Brettin T."/>
            <person name="Bruce D."/>
            <person name="Han C."/>
            <person name="Detter J.C."/>
            <person name="Schmutz J."/>
            <person name="Larimer F."/>
            <person name="Land M."/>
            <person name="Hauser L."/>
            <person name="Kyrpides N."/>
            <person name="Mikhailova N."/>
            <person name="Sieprawska-Lupa M."/>
            <person name="Whitman W.B."/>
            <person name="Richardson P."/>
        </authorList>
    </citation>
    <scope>NUCLEOTIDE SEQUENCE [LARGE SCALE GENOMIC DNA]</scope>
    <source>
        <strain>C5 / ATCC BAA-1333</strain>
    </source>
</reference>
<gene>
    <name evidence="1" type="primary">psmB</name>
    <name type="ordered locus">MmarC5_0881</name>
</gene>
<evidence type="ECO:0000255" key="1">
    <source>
        <dbReference type="HAMAP-Rule" id="MF_02113"/>
    </source>
</evidence>
<comment type="function">
    <text evidence="1">Component of the proteasome core, a large protease complex with broad specificity involved in protein degradation.</text>
</comment>
<comment type="catalytic activity">
    <reaction evidence="1">
        <text>Cleavage of peptide bonds with very broad specificity.</text>
        <dbReference type="EC" id="3.4.25.1"/>
    </reaction>
</comment>
<comment type="activity regulation">
    <text evidence="1">The formation of the proteasomal ATPase PAN-20S proteasome complex, via the docking of the C-termini of PAN into the intersubunit pockets in the alpha-rings, triggers opening of the gate for substrate entry. Interconversion between the open-gate and close-gate conformations leads to a dynamic regulation of the 20S proteasome proteolysis activity.</text>
</comment>
<comment type="subunit">
    <text evidence="1">The 20S proteasome core is composed of 14 alpha and 14 beta subunits that assemble into four stacked heptameric rings, resulting in a barrel-shaped structure. The two inner rings, each composed of seven catalytic beta subunits, are sandwiched by two outer rings, each composed of seven alpha subunits. The catalytic chamber with the active sites is on the inside of the barrel. Has a gated structure, the ends of the cylinder being occluded by the N-termini of the alpha-subunits. Is capped at one or both ends by the proteasome regulatory ATPase, PAN.</text>
</comment>
<comment type="subcellular location">
    <subcellularLocation>
        <location evidence="1">Cytoplasm</location>
    </subcellularLocation>
</comment>
<comment type="similarity">
    <text evidence="1">Belongs to the peptidase T1B family.</text>
</comment>
<feature type="propeptide" id="PRO_0000397348" description="Removed in mature form; by autocatalysis" evidence="1">
    <location>
        <begin position="1"/>
        <end position="14"/>
    </location>
</feature>
<feature type="chain" id="PRO_0000397349" description="Proteasome subunit beta">
    <location>
        <begin position="15"/>
        <end position="219"/>
    </location>
</feature>
<feature type="active site" description="Nucleophile" evidence="1">
    <location>
        <position position="15"/>
    </location>
</feature>
<sequence>MISNSEYHKEYMKGTTTVGLLCKDGVVLATDKRATMGNLIADKEAKKLYKIDDYIAMTIAGSVGDAQSLIRIISAEAKIHKMRTGNNMTPLSCTTLISNVLHGNRHYPLLTQLILGGYDLINGAKLFSLDPVGGINEESSFTATGSGSPTAYGVLEAEYRSDVTIDKGLLVAVKALSSAMQRDAYSGNGISLAHINKDGVKLYSDAEIEGFLKKINKKR</sequence>